<accession>A9AAW1</accession>
<feature type="chain" id="PRO_1000130292" description="Probable ribosomal RNA small subunit methyltransferase A">
    <location>
        <begin position="1"/>
        <end position="263"/>
    </location>
</feature>
<feature type="binding site" evidence="1">
    <location>
        <position position="12"/>
    </location>
    <ligand>
        <name>S-adenosyl-L-methionine</name>
        <dbReference type="ChEBI" id="CHEBI:59789"/>
    </ligand>
</feature>
<feature type="binding site" evidence="1">
    <location>
        <position position="37"/>
    </location>
    <ligand>
        <name>S-adenosyl-L-methionine</name>
        <dbReference type="ChEBI" id="CHEBI:59789"/>
    </ligand>
</feature>
<feature type="binding site" evidence="1">
    <location>
        <position position="58"/>
    </location>
    <ligand>
        <name>S-adenosyl-L-methionine</name>
        <dbReference type="ChEBI" id="CHEBI:59789"/>
    </ligand>
</feature>
<feature type="binding site" evidence="1">
    <location>
        <position position="83"/>
    </location>
    <ligand>
        <name>S-adenosyl-L-methionine</name>
        <dbReference type="ChEBI" id="CHEBI:59789"/>
    </ligand>
</feature>
<feature type="binding site" evidence="1">
    <location>
        <position position="100"/>
    </location>
    <ligand>
        <name>S-adenosyl-L-methionine</name>
        <dbReference type="ChEBI" id="CHEBI:59789"/>
    </ligand>
</feature>
<reference key="1">
    <citation type="submission" date="2007-10" db="EMBL/GenBank/DDBJ databases">
        <title>Complete sequence of Methanococcus maripaludis C6.</title>
        <authorList>
            <consortium name="US DOE Joint Genome Institute"/>
            <person name="Copeland A."/>
            <person name="Lucas S."/>
            <person name="Lapidus A."/>
            <person name="Barry K."/>
            <person name="Glavina del Rio T."/>
            <person name="Dalin E."/>
            <person name="Tice H."/>
            <person name="Pitluck S."/>
            <person name="Clum A."/>
            <person name="Schmutz J."/>
            <person name="Larimer F."/>
            <person name="Land M."/>
            <person name="Hauser L."/>
            <person name="Kyrpides N."/>
            <person name="Mikhailova N."/>
            <person name="Sieprawska-Lupa M."/>
            <person name="Whitman W.B."/>
            <person name="Richardson P."/>
        </authorList>
    </citation>
    <scope>NUCLEOTIDE SEQUENCE [LARGE SCALE GENOMIC DNA]</scope>
    <source>
        <strain>C6 / ATCC BAA-1332</strain>
    </source>
</reference>
<organism>
    <name type="scientific">Methanococcus maripaludis (strain C6 / ATCC BAA-1332)</name>
    <dbReference type="NCBI Taxonomy" id="444158"/>
    <lineage>
        <taxon>Archaea</taxon>
        <taxon>Methanobacteriati</taxon>
        <taxon>Methanobacteriota</taxon>
        <taxon>Methanomada group</taxon>
        <taxon>Methanococci</taxon>
        <taxon>Methanococcales</taxon>
        <taxon>Methanococcaceae</taxon>
        <taxon>Methanococcus</taxon>
    </lineage>
</organism>
<proteinExistence type="inferred from homology"/>
<dbReference type="EC" id="2.1.1.-" evidence="1"/>
<dbReference type="EMBL" id="CP000867">
    <property type="protein sequence ID" value="ABX02484.1"/>
    <property type="molecule type" value="Genomic_DNA"/>
</dbReference>
<dbReference type="SMR" id="A9AAW1"/>
<dbReference type="STRING" id="444158.MmarC6_1672"/>
<dbReference type="KEGG" id="mmx:MmarC6_1672"/>
<dbReference type="eggNOG" id="arCOG04131">
    <property type="taxonomic scope" value="Archaea"/>
</dbReference>
<dbReference type="HOGENOM" id="CLU_041220_0_2_2"/>
<dbReference type="OrthoDB" id="9883at2157"/>
<dbReference type="PhylomeDB" id="A9AAW1"/>
<dbReference type="GO" id="GO:0005737">
    <property type="term" value="C:cytoplasm"/>
    <property type="evidence" value="ECO:0007669"/>
    <property type="project" value="UniProtKB-SubCell"/>
</dbReference>
<dbReference type="GO" id="GO:0003723">
    <property type="term" value="F:RNA binding"/>
    <property type="evidence" value="ECO:0007669"/>
    <property type="project" value="UniProtKB-KW"/>
</dbReference>
<dbReference type="GO" id="GO:0000179">
    <property type="term" value="F:rRNA (adenine-N6,N6-)-dimethyltransferase activity"/>
    <property type="evidence" value="ECO:0007669"/>
    <property type="project" value="InterPro"/>
</dbReference>
<dbReference type="CDD" id="cd02440">
    <property type="entry name" value="AdoMet_MTases"/>
    <property type="match status" value="1"/>
</dbReference>
<dbReference type="FunFam" id="3.40.50.150:FF:000023">
    <property type="entry name" value="Ribosomal RNA small subunit methyltransferase A"/>
    <property type="match status" value="1"/>
</dbReference>
<dbReference type="Gene3D" id="1.10.8.100">
    <property type="entry name" value="Ribosomal RNA adenine dimethylase-like, domain 2"/>
    <property type="match status" value="1"/>
</dbReference>
<dbReference type="Gene3D" id="3.40.50.150">
    <property type="entry name" value="Vaccinia Virus protein VP39"/>
    <property type="match status" value="1"/>
</dbReference>
<dbReference type="HAMAP" id="MF_00607">
    <property type="entry name" value="16SrRNA_methyltr_A"/>
    <property type="match status" value="1"/>
</dbReference>
<dbReference type="InterPro" id="IPR001737">
    <property type="entry name" value="KsgA/Erm"/>
</dbReference>
<dbReference type="InterPro" id="IPR023165">
    <property type="entry name" value="rRNA_Ade_diMease-like_C"/>
</dbReference>
<dbReference type="InterPro" id="IPR020596">
    <property type="entry name" value="rRNA_Ade_Mease_Trfase_CS"/>
</dbReference>
<dbReference type="InterPro" id="IPR020598">
    <property type="entry name" value="rRNA_Ade_methylase_Trfase_N"/>
</dbReference>
<dbReference type="InterPro" id="IPR011530">
    <property type="entry name" value="rRNA_adenine_dimethylase"/>
</dbReference>
<dbReference type="InterPro" id="IPR029063">
    <property type="entry name" value="SAM-dependent_MTases_sf"/>
</dbReference>
<dbReference type="NCBIfam" id="TIGR00755">
    <property type="entry name" value="ksgA"/>
    <property type="match status" value="1"/>
</dbReference>
<dbReference type="PANTHER" id="PTHR11727">
    <property type="entry name" value="DIMETHYLADENOSINE TRANSFERASE"/>
    <property type="match status" value="1"/>
</dbReference>
<dbReference type="PANTHER" id="PTHR11727:SF7">
    <property type="entry name" value="DIMETHYLADENOSINE TRANSFERASE-RELATED"/>
    <property type="match status" value="1"/>
</dbReference>
<dbReference type="Pfam" id="PF00398">
    <property type="entry name" value="RrnaAD"/>
    <property type="match status" value="1"/>
</dbReference>
<dbReference type="SMART" id="SM00650">
    <property type="entry name" value="rADc"/>
    <property type="match status" value="1"/>
</dbReference>
<dbReference type="SUPFAM" id="SSF53335">
    <property type="entry name" value="S-adenosyl-L-methionine-dependent methyltransferases"/>
    <property type="match status" value="1"/>
</dbReference>
<dbReference type="PROSITE" id="PS01131">
    <property type="entry name" value="RRNA_A_DIMETH"/>
    <property type="match status" value="1"/>
</dbReference>
<dbReference type="PROSITE" id="PS51689">
    <property type="entry name" value="SAM_RNA_A_N6_MT"/>
    <property type="match status" value="1"/>
</dbReference>
<sequence>MRQSKKLGQCFLKDKNFVKKAINRAEITDKDIVLEVGLGEGALTKELAKLAKKVYVIELDERLKPFADEITSEFENVEIIWSDALKVDLKNLGFNKIVANLPYQISSPITFKFLEEDFETAVLMYQYEFAKRMAGKPDTKEYSRLSVAVQYNADVEFICKVPPSAFSPKPDVNSAIVKLTKRKPKYSVKDEKFFKKVLKALFQHRNRTIKRALIDSSHEIEIERDALKEILEKIESEFDFTERVFKTPPEKIGHLSNLLYDEL</sequence>
<protein>
    <recommendedName>
        <fullName evidence="1">Probable ribosomal RNA small subunit methyltransferase A</fullName>
        <ecNumber evidence="1">2.1.1.-</ecNumber>
    </recommendedName>
    <alternativeName>
        <fullName evidence="1">16S rRNA dimethyladenosine transferase</fullName>
    </alternativeName>
    <alternativeName>
        <fullName evidence="1">16S rRNA dimethylase</fullName>
    </alternativeName>
    <alternativeName>
        <fullName evidence="1">S-adenosylmethionine-6-N',N'-adenosyl(rRNA) dimethyltransferase</fullName>
    </alternativeName>
</protein>
<evidence type="ECO:0000255" key="1">
    <source>
        <dbReference type="HAMAP-Rule" id="MF_00607"/>
    </source>
</evidence>
<comment type="function">
    <text evidence="1">Specifically dimethylates two adjacent adenosines in the loop of a conserved hairpin near the 3'-end of 16S rRNA in the 30S particle. May play a critical role in biogenesis of 30S subunits.</text>
</comment>
<comment type="subcellular location">
    <subcellularLocation>
        <location evidence="1">Cytoplasm</location>
    </subcellularLocation>
</comment>
<comment type="similarity">
    <text evidence="1">Belongs to the class I-like SAM-binding methyltransferase superfamily. rRNA adenine N(6)-methyltransferase family. RsmA subfamily.</text>
</comment>
<gene>
    <name evidence="1" type="primary">rsmA</name>
    <name evidence="1" type="synonym">ksgA</name>
    <name type="ordered locus">MmarC6_1672</name>
</gene>
<keyword id="KW-0963">Cytoplasm</keyword>
<keyword id="KW-0489">Methyltransferase</keyword>
<keyword id="KW-0694">RNA-binding</keyword>
<keyword id="KW-0698">rRNA processing</keyword>
<keyword id="KW-0949">S-adenosyl-L-methionine</keyword>
<keyword id="KW-0808">Transferase</keyword>
<name>RSMA_METM6</name>